<comment type="function">
    <text evidence="1">Responsible for synthesis of pseudouridine from uracil-55 in the psi GC loop of transfer RNAs.</text>
</comment>
<comment type="catalytic activity">
    <reaction evidence="1">
        <text>uridine(55) in tRNA = pseudouridine(55) in tRNA</text>
        <dbReference type="Rhea" id="RHEA:42532"/>
        <dbReference type="Rhea" id="RHEA-COMP:10101"/>
        <dbReference type="Rhea" id="RHEA-COMP:10102"/>
        <dbReference type="ChEBI" id="CHEBI:65314"/>
        <dbReference type="ChEBI" id="CHEBI:65315"/>
        <dbReference type="EC" id="5.4.99.25"/>
    </reaction>
</comment>
<comment type="similarity">
    <text evidence="1">Belongs to the pseudouridine synthase TruB family. Type 1 subfamily.</text>
</comment>
<protein>
    <recommendedName>
        <fullName evidence="1">tRNA pseudouridine synthase B</fullName>
        <ecNumber evidence="1">5.4.99.25</ecNumber>
    </recommendedName>
    <alternativeName>
        <fullName evidence="1">tRNA pseudouridine(55) synthase</fullName>
        <shortName evidence="1">Psi55 synthase</shortName>
    </alternativeName>
    <alternativeName>
        <fullName evidence="1">tRNA pseudouridylate synthase</fullName>
    </alternativeName>
    <alternativeName>
        <fullName evidence="1">tRNA-uridine isomerase</fullName>
    </alternativeName>
</protein>
<reference key="1">
    <citation type="journal article" date="2004" name="Nucleic Acids Res.">
        <title>Comparative analysis of the Borrelia garinii genome.</title>
        <authorList>
            <person name="Gloeckner G."/>
            <person name="Lehmann R."/>
            <person name="Romualdi A."/>
            <person name="Pradella S."/>
            <person name="Schulte-Spechtel U."/>
            <person name="Schilhabel M."/>
            <person name="Wilske B."/>
            <person name="Suehnel J."/>
            <person name="Platzer M."/>
        </authorList>
    </citation>
    <scope>NUCLEOTIDE SEQUENCE [LARGE SCALE GENOMIC DNA]</scope>
    <source>
        <strain>ATCC BAA-2496 / DSM 23469 / PBi</strain>
    </source>
</reference>
<accession>Q65ZX0</accession>
<gene>
    <name evidence="1" type="primary">truB</name>
    <name type="ordered locus">BG0829</name>
</gene>
<name>TRUB_BORGP</name>
<evidence type="ECO:0000255" key="1">
    <source>
        <dbReference type="HAMAP-Rule" id="MF_01080"/>
    </source>
</evidence>
<organism>
    <name type="scientific">Borrelia garinii subsp. bavariensis (strain ATCC BAA-2496 / DSM 23469 / PBi)</name>
    <name type="common">Borreliella bavariensis</name>
    <dbReference type="NCBI Taxonomy" id="290434"/>
    <lineage>
        <taxon>Bacteria</taxon>
        <taxon>Pseudomonadati</taxon>
        <taxon>Spirochaetota</taxon>
        <taxon>Spirochaetia</taxon>
        <taxon>Spirochaetales</taxon>
        <taxon>Borreliaceae</taxon>
        <taxon>Borreliella</taxon>
    </lineage>
</organism>
<feature type="chain" id="PRO_0000121799" description="tRNA pseudouridine synthase B">
    <location>
        <begin position="1"/>
        <end position="282"/>
    </location>
</feature>
<feature type="active site" description="Nucleophile" evidence="1">
    <location>
        <position position="39"/>
    </location>
</feature>
<keyword id="KW-0413">Isomerase</keyword>
<keyword id="KW-0819">tRNA processing</keyword>
<dbReference type="EC" id="5.4.99.25" evidence="1"/>
<dbReference type="EMBL" id="CP000013">
    <property type="protein sequence ID" value="AAU07651.1"/>
    <property type="molecule type" value="Genomic_DNA"/>
</dbReference>
<dbReference type="RefSeq" id="WP_011194096.1">
    <property type="nucleotide sequence ID" value="NZ_CP028872.1"/>
</dbReference>
<dbReference type="SMR" id="Q65ZX0"/>
<dbReference type="GeneID" id="45161603"/>
<dbReference type="KEGG" id="bga:BG0829"/>
<dbReference type="eggNOG" id="COG0130">
    <property type="taxonomic scope" value="Bacteria"/>
</dbReference>
<dbReference type="HOGENOM" id="CLU_032087_0_2_12"/>
<dbReference type="OrthoDB" id="9802309at2"/>
<dbReference type="Proteomes" id="UP000002276">
    <property type="component" value="Chromosome"/>
</dbReference>
<dbReference type="GO" id="GO:0003723">
    <property type="term" value="F:RNA binding"/>
    <property type="evidence" value="ECO:0007669"/>
    <property type="project" value="InterPro"/>
</dbReference>
<dbReference type="GO" id="GO:0160148">
    <property type="term" value="F:tRNA pseudouridine(55) synthase activity"/>
    <property type="evidence" value="ECO:0007669"/>
    <property type="project" value="UniProtKB-EC"/>
</dbReference>
<dbReference type="GO" id="GO:1990481">
    <property type="term" value="P:mRNA pseudouridine synthesis"/>
    <property type="evidence" value="ECO:0007669"/>
    <property type="project" value="TreeGrafter"/>
</dbReference>
<dbReference type="GO" id="GO:0031119">
    <property type="term" value="P:tRNA pseudouridine synthesis"/>
    <property type="evidence" value="ECO:0007669"/>
    <property type="project" value="UniProtKB-UniRule"/>
</dbReference>
<dbReference type="CDD" id="cd02573">
    <property type="entry name" value="PseudoU_synth_EcTruB"/>
    <property type="match status" value="1"/>
</dbReference>
<dbReference type="Gene3D" id="3.30.2350.10">
    <property type="entry name" value="Pseudouridine synthase"/>
    <property type="match status" value="1"/>
</dbReference>
<dbReference type="HAMAP" id="MF_01080">
    <property type="entry name" value="TruB_bact"/>
    <property type="match status" value="1"/>
</dbReference>
<dbReference type="InterPro" id="IPR020103">
    <property type="entry name" value="PsdUridine_synth_cat_dom_sf"/>
</dbReference>
<dbReference type="InterPro" id="IPR002501">
    <property type="entry name" value="PsdUridine_synth_N"/>
</dbReference>
<dbReference type="InterPro" id="IPR014780">
    <property type="entry name" value="tRNA_psdUridine_synth_TruB"/>
</dbReference>
<dbReference type="NCBIfam" id="TIGR00431">
    <property type="entry name" value="TruB"/>
    <property type="match status" value="1"/>
</dbReference>
<dbReference type="PANTHER" id="PTHR13767:SF2">
    <property type="entry name" value="PSEUDOURIDYLATE SYNTHASE TRUB1"/>
    <property type="match status" value="1"/>
</dbReference>
<dbReference type="PANTHER" id="PTHR13767">
    <property type="entry name" value="TRNA-PSEUDOURIDINE SYNTHASE"/>
    <property type="match status" value="1"/>
</dbReference>
<dbReference type="Pfam" id="PF01509">
    <property type="entry name" value="TruB_N"/>
    <property type="match status" value="1"/>
</dbReference>
<dbReference type="SUPFAM" id="SSF55120">
    <property type="entry name" value="Pseudouridine synthase"/>
    <property type="match status" value="1"/>
</dbReference>
<sequence>MENGFLLINKEQGKTSFETLFPIKKYFNTNHVGHAGTLDKFASGILIALVGKYTKLAGYFISLDKEYVAEFRFGLETDTLDSNGRIVNKADYIPSVEDIDLKLKDFVGEIYQSPPRFSSIHIDGIRAYKLALNGKFFEIKKRRVNVYDIQRLSYDFSSSSLSLKITCSKGTYIRSIARDLAYSLNSCAYVSNLKRTKIGMFRLKDSTLCKNLSKSSLISLESLSSFKKVYIDSSKVNLVKNGAYVEVQININEFKILKSREGEILAVIEGIGFNKYKYVIIF</sequence>
<proteinExistence type="inferred from homology"/>